<keyword id="KW-0010">Activator</keyword>
<keyword id="KW-1005">Bacterial flagellum biogenesis</keyword>
<keyword id="KW-0963">Cytoplasm</keyword>
<keyword id="KW-1015">Disulfide bond</keyword>
<keyword id="KW-0238">DNA-binding</keyword>
<keyword id="KW-1185">Reference proteome</keyword>
<keyword id="KW-0804">Transcription</keyword>
<keyword id="KW-0805">Transcription regulation</keyword>
<gene>
    <name evidence="1" type="primary">flhD</name>
    <name type="ordered locus">ETA_14580</name>
</gene>
<comment type="function">
    <text evidence="1">Functions in complex with FlhC as a master transcriptional regulator that regulates transcription of several flagellar and non-flagellar operons by binding to their promoter region. Activates expression of class 2 flagellar genes, including fliA, which is a flagellum-specific sigma factor that turns on the class 3 genes. Also regulates genes whose products function in a variety of physiological pathways.</text>
</comment>
<comment type="subunit">
    <text evidence="1">Homodimer; disulfide-linked. Forms a heterohexamer composed of two FlhC and four FlhD subunits. Each FlhC binds a FlhD dimer, forming a heterotrimer, and a hexamer assembles by dimerization of two heterotrimers.</text>
</comment>
<comment type="subcellular location">
    <subcellularLocation>
        <location evidence="1">Cytoplasm</location>
    </subcellularLocation>
</comment>
<comment type="domain">
    <text evidence="1">The C-terminal region contains a putative helix-turn-helix (HTH) motif, suggesting that this region may bind DNA.</text>
</comment>
<comment type="similarity">
    <text evidence="1">Belongs to the FlhD family.</text>
</comment>
<protein>
    <recommendedName>
        <fullName evidence="1">Flagellar transcriptional regulator FlhD</fullName>
    </recommendedName>
</protein>
<organism>
    <name type="scientific">Erwinia tasmaniensis (strain DSM 17950 / CFBP 7177 / CIP 109463 / NCPPB 4357 / Et1/99)</name>
    <dbReference type="NCBI Taxonomy" id="465817"/>
    <lineage>
        <taxon>Bacteria</taxon>
        <taxon>Pseudomonadati</taxon>
        <taxon>Pseudomonadota</taxon>
        <taxon>Gammaproteobacteria</taxon>
        <taxon>Enterobacterales</taxon>
        <taxon>Erwiniaceae</taxon>
        <taxon>Erwinia</taxon>
    </lineage>
</organism>
<sequence length="120" mass="13729">MEKMGTSELLKHIYDINLSYLLLAQRIINQEKVSAMFRLGIDEAMADALASLTLPEMVKLAETNQLVCQFRFNDHQSITRLTQESRVEDLQQIHTGILLSSRLLRDVSQENKTPKKRAVS</sequence>
<name>FLHD_ERWT9</name>
<reference key="1">
    <citation type="journal article" date="2008" name="Environ. Microbiol.">
        <title>The genome of Erwinia tasmaniensis strain Et1/99, a non-pathogenic bacterium in the genus Erwinia.</title>
        <authorList>
            <person name="Kube M."/>
            <person name="Migdoll A.M."/>
            <person name="Mueller I."/>
            <person name="Kuhl H."/>
            <person name="Beck A."/>
            <person name="Reinhardt R."/>
            <person name="Geider K."/>
        </authorList>
    </citation>
    <scope>NUCLEOTIDE SEQUENCE [LARGE SCALE GENOMIC DNA]</scope>
    <source>
        <strain>DSM 17950 / CFBP 7177 / CIP 109463 / NCPPB 4357 / Et1/99</strain>
    </source>
</reference>
<feature type="chain" id="PRO_1000132689" description="Flagellar transcriptional regulator FlhD">
    <location>
        <begin position="1"/>
        <end position="120"/>
    </location>
</feature>
<feature type="disulfide bond" description="Interchain" evidence="1">
    <location>
        <position position="68"/>
    </location>
</feature>
<proteinExistence type="inferred from homology"/>
<dbReference type="EMBL" id="CU468135">
    <property type="protein sequence ID" value="CAO96504.1"/>
    <property type="molecule type" value="Genomic_DNA"/>
</dbReference>
<dbReference type="SMR" id="B2VJD3"/>
<dbReference type="STRING" id="465817.ETA_14580"/>
<dbReference type="KEGG" id="eta:ETA_14580"/>
<dbReference type="eggNOG" id="ENOG5031P80">
    <property type="taxonomic scope" value="Bacteria"/>
</dbReference>
<dbReference type="HOGENOM" id="CLU_144160_0_0_6"/>
<dbReference type="Proteomes" id="UP000001726">
    <property type="component" value="Chromosome"/>
</dbReference>
<dbReference type="GO" id="GO:0005737">
    <property type="term" value="C:cytoplasm"/>
    <property type="evidence" value="ECO:0007669"/>
    <property type="project" value="UniProtKB-SubCell"/>
</dbReference>
<dbReference type="GO" id="GO:0003677">
    <property type="term" value="F:DNA binding"/>
    <property type="evidence" value="ECO:0007669"/>
    <property type="project" value="UniProtKB-UniRule"/>
</dbReference>
<dbReference type="GO" id="GO:0044780">
    <property type="term" value="P:bacterial-type flagellum assembly"/>
    <property type="evidence" value="ECO:0007669"/>
    <property type="project" value="InterPro"/>
</dbReference>
<dbReference type="GO" id="GO:0045893">
    <property type="term" value="P:positive regulation of DNA-templated transcription"/>
    <property type="evidence" value="ECO:0007669"/>
    <property type="project" value="InterPro"/>
</dbReference>
<dbReference type="GO" id="GO:1902208">
    <property type="term" value="P:regulation of bacterial-type flagellum assembly"/>
    <property type="evidence" value="ECO:0007669"/>
    <property type="project" value="UniProtKB-UniRule"/>
</dbReference>
<dbReference type="Gene3D" id="1.10.4000.10">
    <property type="entry name" value="Flagellar transcriptional activator FlhD"/>
    <property type="match status" value="1"/>
</dbReference>
<dbReference type="HAMAP" id="MF_00725">
    <property type="entry name" value="FlhD"/>
    <property type="match status" value="1"/>
</dbReference>
<dbReference type="InterPro" id="IPR023559">
    <property type="entry name" value="Flagellar_FlhD"/>
</dbReference>
<dbReference type="InterPro" id="IPR036194">
    <property type="entry name" value="FlhD_sf"/>
</dbReference>
<dbReference type="NCBIfam" id="NF002783">
    <property type="entry name" value="PRK02909.1-1"/>
    <property type="match status" value="1"/>
</dbReference>
<dbReference type="Pfam" id="PF05247">
    <property type="entry name" value="FlhD"/>
    <property type="match status" value="1"/>
</dbReference>
<dbReference type="SUPFAM" id="SSF63592">
    <property type="entry name" value="Flagellar transcriptional activator FlhD"/>
    <property type="match status" value="1"/>
</dbReference>
<accession>B2VJD3</accession>
<evidence type="ECO:0000255" key="1">
    <source>
        <dbReference type="HAMAP-Rule" id="MF_00725"/>
    </source>
</evidence>